<evidence type="ECO:0000250" key="1">
    <source>
        <dbReference type="UniProtKB" id="P63151"/>
    </source>
</evidence>
<evidence type="ECO:0000250" key="2">
    <source>
        <dbReference type="UniProtKB" id="Q6P1F6"/>
    </source>
</evidence>
<evidence type="ECO:0000305" key="3"/>
<feature type="initiator methionine" description="Removed" evidence="1">
    <location>
        <position position="1"/>
    </location>
</feature>
<feature type="chain" id="PRO_0000071419" description="Serine/threonine-protein phosphatase 2A 55 kDa regulatory subunit B alpha isoform">
    <location>
        <begin position="2"/>
        <end position="447"/>
    </location>
</feature>
<feature type="repeat" description="WD 1" evidence="1">
    <location>
        <begin position="11"/>
        <end position="80"/>
    </location>
</feature>
<feature type="repeat" description="WD 2" evidence="1">
    <location>
        <begin position="94"/>
        <end position="174"/>
    </location>
</feature>
<feature type="repeat" description="WD 3" evidence="1">
    <location>
        <begin position="175"/>
        <end position="218"/>
    </location>
</feature>
<feature type="repeat" description="WD 4" evidence="1">
    <location>
        <begin position="227"/>
        <end position="270"/>
    </location>
</feature>
<feature type="repeat" description="WD 5" evidence="1">
    <location>
        <begin position="288"/>
        <end position="325"/>
    </location>
</feature>
<feature type="repeat" description="WD 6" evidence="1">
    <location>
        <begin position="347"/>
        <end position="381"/>
    </location>
</feature>
<feature type="repeat" description="WD 7" evidence="1">
    <location>
        <begin position="414"/>
        <end position="446"/>
    </location>
</feature>
<feature type="modified residue" description="N-acetylalanine" evidence="1">
    <location>
        <position position="2"/>
    </location>
</feature>
<sequence length="447" mass="51692">MAGAGGGNDIQWCFSQVKGAVDDDVAEADIISTVEFNHSGELLATGDKGGRVVIFQQEQENKIQSHSRGEYNVYSTFQSHEPEFDYLKSLEIEEKINKIRWLPQKNAAQFLLSTNDKTIKLWKISERDKRPEGYNLKEEDGRYRDPTTVTTLRVPVFRPMDLMVEASPRRIFANAHTYHINSISINSDYETYLSADDLRINLWHLEITDRSFNIVDIKPANMEELTEVITAAEFHPNSCNTFVYSSSKGTIRLCDMRASALCDRHSKLFEEPEDPSNRSFFSEIISSISDVKFSHSGRYMMTRDYLSVKIWDLNMENRPVETYQVHEYLRSKLCSLYENDCIFDKFECCWNGSDSVVMTGSYNNFFRMFDRNTKRDITLEASRENNKPRTVLKPRKVCASGKRKKDEISVDSLDFNKKILHTAWHPKENIIAVATTNNLYIFQDKVN</sequence>
<name>2ABA_RABIT</name>
<comment type="function">
    <text evidence="1 2">Substrate-recognition subunit of protein phosphatase 2A (PP2A) that plays a key role in cell cycle by controlling mitosis entry and exit. Involved in chromosome clustering during late mitosis by mediating dephosphorylation of MKI67 (By similarity). Essential for serine/threonine-protein phosphatase 2A-mediated dephosphorylation of WEE1, preventing its ubiquitin-mediated proteolysis, increasing WEE1 protein levels, and promoting the G2/M checkpoint (By similarity).</text>
</comment>
<comment type="subunit">
    <text evidence="1 2">PP2A consists of a common heterodimeric core enzyme, composed of a 36 kDa catalytic subunit (subunit C) and a 65 kDa constant regulatory subunit (PR65 or subunit A), that associates with a variety of regulatory subunits (By similarity). Proteins that associate with the core dimer include three families of regulatory subunits B (the R2/B/PR55/B55, R3/B''/PR72/PR130/PR59 and R5/B'/B56 families), the 48 kDa variable regulatory subunit, viral proteins, and cell signaling molecules (By similarity). Interacts with the PP2A C catalytic subunit PPP2CA (By similarity). Interacts with the PP2A A subunit PPP2R1A (By similarity). Interacts with TP53 (By similarity). Interacts with IER5 (By similarity). Interacts with MFHAS1; the interaction is direct (By similarity). Interacts with PABIR1/FAM122A (via its N-terminus); the interaction is direct and inhibits PP2A activity (By similarity). Interacts with ARPP19; the interaction is direct and inhibits PP2A activity (By similarity). Interacts with CRTC3 (By similarity).</text>
</comment>
<comment type="domain">
    <text evidence="1">Has an extended WD 2 repeat that is important for the interaction with PPP2R1A.</text>
</comment>
<comment type="similarity">
    <text evidence="3">Belongs to the phosphatase 2A regulatory subunit B family.</text>
</comment>
<accession>P63150</accession>
<accession>P50409</accession>
<accession>Q00007</accession>
<keyword id="KW-0007">Acetylation</keyword>
<keyword id="KW-1185">Reference proteome</keyword>
<keyword id="KW-0677">Repeat</keyword>
<keyword id="KW-0853">WD repeat</keyword>
<reference key="1">
    <citation type="submission" date="1994-05" db="EMBL/GenBank/DDBJ databases">
        <authorList>
            <person name="Depaoli-Roach A.A."/>
        </authorList>
    </citation>
    <scope>NUCLEOTIDE SEQUENCE [MRNA]</scope>
    <source>
        <strain>New Zealand white</strain>
        <tissue>Skeletal muscle</tissue>
    </source>
</reference>
<gene>
    <name type="primary">PPP2R2A</name>
</gene>
<protein>
    <recommendedName>
        <fullName>Serine/threonine-protein phosphatase 2A 55 kDa regulatory subunit B alpha isoform</fullName>
    </recommendedName>
    <alternativeName>
        <fullName>PP2A subunit B isoform B55-alpha</fullName>
        <shortName evidence="1">B55</shortName>
    </alternativeName>
    <alternativeName>
        <fullName>PP2A subunit B isoform PR55-alpha</fullName>
    </alternativeName>
    <alternativeName>
        <fullName>PP2A subunit B isoform R2-alpha</fullName>
    </alternativeName>
    <alternativeName>
        <fullName>PP2A subunit B isoform alpha</fullName>
    </alternativeName>
</protein>
<dbReference type="EMBL" id="U09356">
    <property type="protein sequence ID" value="AAA18497.1"/>
    <property type="molecule type" value="mRNA"/>
</dbReference>
<dbReference type="RefSeq" id="NP_001164546.1">
    <property type="nucleotide sequence ID" value="NM_001171075.1"/>
</dbReference>
<dbReference type="SMR" id="P63150"/>
<dbReference type="FunCoup" id="P63150">
    <property type="interactions" value="1916"/>
</dbReference>
<dbReference type="STRING" id="9986.ENSOCUP00000035053"/>
<dbReference type="PaxDb" id="9986-ENSOCUP00000021074"/>
<dbReference type="Ensembl" id="ENSOCUT00000048479.1">
    <property type="protein sequence ID" value="ENSOCUP00000035053.1"/>
    <property type="gene ID" value="ENSOCUG00000027088.3"/>
</dbReference>
<dbReference type="GeneID" id="100328616"/>
<dbReference type="KEGG" id="ocu:100328616"/>
<dbReference type="CTD" id="5520"/>
<dbReference type="eggNOG" id="KOG1354">
    <property type="taxonomic scope" value="Eukaryota"/>
</dbReference>
<dbReference type="GeneTree" id="ENSGT00950000182864"/>
<dbReference type="HOGENOM" id="CLU_021713_3_3_1"/>
<dbReference type="InParanoid" id="P63150"/>
<dbReference type="OMA" id="MDYSVRH"/>
<dbReference type="OrthoDB" id="6274823at2759"/>
<dbReference type="Proteomes" id="UP000001811">
    <property type="component" value="Chromosome 2"/>
</dbReference>
<dbReference type="Bgee" id="ENSOCUG00000027088">
    <property type="expression patterns" value="Expressed in autopod skin and 15 other cell types or tissues"/>
</dbReference>
<dbReference type="GO" id="GO:0098978">
    <property type="term" value="C:glutamatergic synapse"/>
    <property type="evidence" value="ECO:0007669"/>
    <property type="project" value="Ensembl"/>
</dbReference>
<dbReference type="GO" id="GO:0000159">
    <property type="term" value="C:protein phosphatase type 2A complex"/>
    <property type="evidence" value="ECO:0000250"/>
    <property type="project" value="UniProtKB"/>
</dbReference>
<dbReference type="GO" id="GO:0140767">
    <property type="term" value="F:enzyme-substrate adaptor activity"/>
    <property type="evidence" value="ECO:0000250"/>
    <property type="project" value="UniProtKB"/>
</dbReference>
<dbReference type="GO" id="GO:0019888">
    <property type="term" value="F:protein phosphatase regulator activity"/>
    <property type="evidence" value="ECO:0000250"/>
    <property type="project" value="UniProtKB"/>
</dbReference>
<dbReference type="GO" id="GO:0006470">
    <property type="term" value="P:protein dephosphorylation"/>
    <property type="evidence" value="ECO:0000250"/>
    <property type="project" value="UniProtKB"/>
</dbReference>
<dbReference type="GO" id="GO:0051983">
    <property type="term" value="P:regulation of chromosome segregation"/>
    <property type="evidence" value="ECO:0000250"/>
    <property type="project" value="UniProtKB"/>
</dbReference>
<dbReference type="GO" id="GO:0043278">
    <property type="term" value="P:response to morphine"/>
    <property type="evidence" value="ECO:0007669"/>
    <property type="project" value="Ensembl"/>
</dbReference>
<dbReference type="FunFam" id="2.130.10.10:FF:000002">
    <property type="entry name" value="Serine/threonine-protein phosphatase 2A 55 kDa regulatory subunit B"/>
    <property type="match status" value="1"/>
</dbReference>
<dbReference type="Gene3D" id="2.130.10.10">
    <property type="entry name" value="YVTN repeat-like/Quinoprotein amine dehydrogenase"/>
    <property type="match status" value="1"/>
</dbReference>
<dbReference type="InterPro" id="IPR000009">
    <property type="entry name" value="PP2A_PR55"/>
</dbReference>
<dbReference type="InterPro" id="IPR018067">
    <property type="entry name" value="PP2A_PR55_CS"/>
</dbReference>
<dbReference type="InterPro" id="IPR015943">
    <property type="entry name" value="WD40/YVTN_repeat-like_dom_sf"/>
</dbReference>
<dbReference type="InterPro" id="IPR036322">
    <property type="entry name" value="WD40_repeat_dom_sf"/>
</dbReference>
<dbReference type="InterPro" id="IPR001680">
    <property type="entry name" value="WD40_rpt"/>
</dbReference>
<dbReference type="PANTHER" id="PTHR11871">
    <property type="entry name" value="PROTEIN PHOSPHATASE PP2A REGULATORY SUBUNIT B"/>
    <property type="match status" value="1"/>
</dbReference>
<dbReference type="PIRSF" id="PIRSF037309">
    <property type="entry name" value="PP2A_PR55"/>
    <property type="match status" value="1"/>
</dbReference>
<dbReference type="PRINTS" id="PR00600">
    <property type="entry name" value="PP2APR55"/>
</dbReference>
<dbReference type="SMART" id="SM00320">
    <property type="entry name" value="WD40"/>
    <property type="match status" value="7"/>
</dbReference>
<dbReference type="SUPFAM" id="SSF50978">
    <property type="entry name" value="WD40 repeat-like"/>
    <property type="match status" value="1"/>
</dbReference>
<dbReference type="PROSITE" id="PS01024">
    <property type="entry name" value="PR55_1"/>
    <property type="match status" value="1"/>
</dbReference>
<dbReference type="PROSITE" id="PS01025">
    <property type="entry name" value="PR55_2"/>
    <property type="match status" value="1"/>
</dbReference>
<organism>
    <name type="scientific">Oryctolagus cuniculus</name>
    <name type="common">Rabbit</name>
    <dbReference type="NCBI Taxonomy" id="9986"/>
    <lineage>
        <taxon>Eukaryota</taxon>
        <taxon>Metazoa</taxon>
        <taxon>Chordata</taxon>
        <taxon>Craniata</taxon>
        <taxon>Vertebrata</taxon>
        <taxon>Euteleostomi</taxon>
        <taxon>Mammalia</taxon>
        <taxon>Eutheria</taxon>
        <taxon>Euarchontoglires</taxon>
        <taxon>Glires</taxon>
        <taxon>Lagomorpha</taxon>
        <taxon>Leporidae</taxon>
        <taxon>Oryctolagus</taxon>
    </lineage>
</organism>
<proteinExistence type="evidence at transcript level"/>